<evidence type="ECO:0000250" key="1">
    <source>
        <dbReference type="UniProtKB" id="Q65200"/>
    </source>
</evidence>
<evidence type="ECO:0000255" key="2"/>
<evidence type="ECO:0000305" key="3"/>
<protein>
    <recommendedName>
        <fullName>Inner membrane protein pE248R</fullName>
        <shortName>pE248R</shortName>
    </recommendedName>
</protein>
<sequence>MGGSTSKNSFKNTTNIISHSIFNQMQNCISMLDGTNYIGVFGDGNIINHVFQDLNLSLDTSCVQKHVNEENFITNLSNQITQNLKDQEVALTQWMDAGHHDQKTDIEENIKVNLKTTLIQNCVSALSGMNVLVVKGNGNIVENATQKQSQQIISNCLQGSKQAIDTTTGITNTVNQYSHYTSKNFFEFIADAISAVFKNIMVAAVVIVVIIVGFIAVFYFLHSRHRHEEEEEAEPLITSKILKNAAVSQ</sequence>
<feature type="initiator methionine" description="Removed" evidence="2">
    <location>
        <position position="1"/>
    </location>
</feature>
<feature type="chain" id="PRO_0000373605" description="Inner membrane protein pE248R">
    <location>
        <begin position="2"/>
        <end position="249"/>
    </location>
</feature>
<feature type="topological domain" description="Cytoplasmic" evidence="1">
    <location>
        <begin position="2"/>
        <end position="199"/>
    </location>
</feature>
<feature type="transmembrane region" description="Helical" evidence="2">
    <location>
        <begin position="200"/>
        <end position="220"/>
    </location>
</feature>
<feature type="topological domain" description="Extracellular" evidence="1">
    <location>
        <begin position="221"/>
        <end position="249"/>
    </location>
</feature>
<feature type="lipid moiety-binding region" description="N-myristoyl glycine; by host" evidence="2">
    <location>
        <position position="2"/>
    </location>
</feature>
<proteinExistence type="inferred from homology"/>
<comment type="function">
    <text evidence="1">Essential for viral fusion with host endosomal membrane and core release.</text>
</comment>
<comment type="subunit">
    <text evidence="1">Interacts with A151R.</text>
</comment>
<comment type="subcellular location">
    <subcellularLocation>
        <location evidence="1">Host membrane</location>
        <topology evidence="1">Single-pass type II membrane protein</topology>
    </subcellularLocation>
    <subcellularLocation>
        <location evidence="1">Virion membrane</location>
    </subcellularLocation>
    <text evidence="1">Probably part of the virion inner membrane.</text>
</comment>
<comment type="similarity">
    <text evidence="3">Belongs to the asfivirus E248R family.</text>
</comment>
<accession>P0CAB0</accession>
<organism>
    <name type="scientific">African swine fever virus (isolate Pig/Kenya/KEN-50/1950)</name>
    <name type="common">ASFV</name>
    <dbReference type="NCBI Taxonomy" id="561445"/>
    <lineage>
        <taxon>Viruses</taxon>
        <taxon>Varidnaviria</taxon>
        <taxon>Bamfordvirae</taxon>
        <taxon>Nucleocytoviricota</taxon>
        <taxon>Pokkesviricetes</taxon>
        <taxon>Asfuvirales</taxon>
        <taxon>Asfarviridae</taxon>
        <taxon>Asfivirus</taxon>
        <taxon>African swine fever virus</taxon>
    </lineage>
</organism>
<gene>
    <name type="ordered locus">Ken-144</name>
</gene>
<keyword id="KW-1231">Capsid inner membrane protein</keyword>
<keyword id="KW-1043">Host membrane</keyword>
<keyword id="KW-0449">Lipoprotein</keyword>
<keyword id="KW-0472">Membrane</keyword>
<keyword id="KW-0519">Myristate</keyword>
<keyword id="KW-0735">Signal-anchor</keyword>
<keyword id="KW-0812">Transmembrane</keyword>
<keyword id="KW-1133">Transmembrane helix</keyword>
<keyword id="KW-0946">Virion</keyword>
<name>E248R_ASFK5</name>
<reference key="1">
    <citation type="submission" date="2003-03" db="EMBL/GenBank/DDBJ databases">
        <title>African swine fever virus genomes.</title>
        <authorList>
            <person name="Kutish G.F."/>
            <person name="Rock D.L."/>
        </authorList>
    </citation>
    <scope>NUCLEOTIDE SEQUENCE [LARGE SCALE GENOMIC DNA]</scope>
</reference>
<dbReference type="EMBL" id="AY261360">
    <property type="status" value="NOT_ANNOTATED_CDS"/>
    <property type="molecule type" value="Genomic_DNA"/>
</dbReference>
<dbReference type="SMR" id="P0CAB0"/>
<dbReference type="Proteomes" id="UP000000861">
    <property type="component" value="Segment"/>
</dbReference>
<dbReference type="GO" id="GO:0033644">
    <property type="term" value="C:host cell membrane"/>
    <property type="evidence" value="ECO:0007669"/>
    <property type="project" value="UniProtKB-SubCell"/>
</dbReference>
<dbReference type="GO" id="GO:0016020">
    <property type="term" value="C:membrane"/>
    <property type="evidence" value="ECO:0007669"/>
    <property type="project" value="UniProtKB-KW"/>
</dbReference>
<dbReference type="GO" id="GO:0039641">
    <property type="term" value="C:viral inner membrane"/>
    <property type="evidence" value="ECO:0007669"/>
    <property type="project" value="UniProtKB-KW"/>
</dbReference>
<dbReference type="GO" id="GO:0055036">
    <property type="term" value="C:virion membrane"/>
    <property type="evidence" value="ECO:0007669"/>
    <property type="project" value="UniProtKB-SubCell"/>
</dbReference>
<dbReference type="InterPro" id="IPR003472">
    <property type="entry name" value="Virion_mem_poxvirus_L1"/>
</dbReference>
<dbReference type="Pfam" id="PF02442">
    <property type="entry name" value="L1R_F9L"/>
    <property type="match status" value="1"/>
</dbReference>
<organismHost>
    <name type="scientific">Ornithodoros</name>
    <name type="common">relapsing fever ticks</name>
    <dbReference type="NCBI Taxonomy" id="6937"/>
</organismHost>
<organismHost>
    <name type="scientific">Phacochoerus aethiopicus</name>
    <name type="common">Warthog</name>
    <dbReference type="NCBI Taxonomy" id="85517"/>
</organismHost>
<organismHost>
    <name type="scientific">Phacochoerus africanus</name>
    <name type="common">Warthog</name>
    <dbReference type="NCBI Taxonomy" id="41426"/>
</organismHost>
<organismHost>
    <name type="scientific">Potamochoerus larvatus</name>
    <name type="common">Bushpig</name>
    <dbReference type="NCBI Taxonomy" id="273792"/>
</organismHost>
<organismHost>
    <name type="scientific">Sus scrofa</name>
    <name type="common">Pig</name>
    <dbReference type="NCBI Taxonomy" id="9823"/>
</organismHost>